<dbReference type="EMBL" id="BA000035">
    <property type="protein sequence ID" value="BAC18383.1"/>
    <property type="molecule type" value="Genomic_DNA"/>
</dbReference>
<dbReference type="RefSeq" id="WP_006767572.1">
    <property type="nucleotide sequence ID" value="NC_004369.1"/>
</dbReference>
<dbReference type="SMR" id="Q8FTJ5"/>
<dbReference type="STRING" id="196164.gene:10741992"/>
<dbReference type="KEGG" id="cef:CE1573"/>
<dbReference type="eggNOG" id="COG1716">
    <property type="taxonomic scope" value="Bacteria"/>
</dbReference>
<dbReference type="HOGENOM" id="CLU_108862_1_0_11"/>
<dbReference type="OrthoDB" id="9815925at2"/>
<dbReference type="Proteomes" id="UP000001409">
    <property type="component" value="Chromosome"/>
</dbReference>
<dbReference type="GO" id="GO:0005737">
    <property type="term" value="C:cytoplasm"/>
    <property type="evidence" value="ECO:0007669"/>
    <property type="project" value="UniProtKB-SubCell"/>
</dbReference>
<dbReference type="CDD" id="cd22684">
    <property type="entry name" value="FHA_GarA_OdhI-like"/>
    <property type="match status" value="1"/>
</dbReference>
<dbReference type="Gene3D" id="2.60.200.20">
    <property type="match status" value="1"/>
</dbReference>
<dbReference type="InterPro" id="IPR050923">
    <property type="entry name" value="Cell_Proc_Reg/RNA_Proc"/>
</dbReference>
<dbReference type="InterPro" id="IPR000253">
    <property type="entry name" value="FHA_dom"/>
</dbReference>
<dbReference type="InterPro" id="IPR048204">
    <property type="entry name" value="OxygluDhInhib_OdhI"/>
</dbReference>
<dbReference type="InterPro" id="IPR008984">
    <property type="entry name" value="SMAD_FHA_dom_sf"/>
</dbReference>
<dbReference type="NCBIfam" id="NF041660">
    <property type="entry name" value="oxygluDhInhib_OdhI"/>
    <property type="match status" value="1"/>
</dbReference>
<dbReference type="PANTHER" id="PTHR23308">
    <property type="entry name" value="NUCLEAR INHIBITOR OF PROTEIN PHOSPHATASE-1"/>
    <property type="match status" value="1"/>
</dbReference>
<dbReference type="Pfam" id="PF00498">
    <property type="entry name" value="FHA"/>
    <property type="match status" value="1"/>
</dbReference>
<dbReference type="SMART" id="SM00240">
    <property type="entry name" value="FHA"/>
    <property type="match status" value="1"/>
</dbReference>
<dbReference type="SUPFAM" id="SSF49879">
    <property type="entry name" value="SMAD/FHA domain"/>
    <property type="match status" value="1"/>
</dbReference>
<dbReference type="PROSITE" id="PS50006">
    <property type="entry name" value="FHA_DOMAIN"/>
    <property type="match status" value="1"/>
</dbReference>
<evidence type="ECO:0000250" key="1"/>
<evidence type="ECO:0000255" key="2">
    <source>
        <dbReference type="PROSITE-ProRule" id="PRU00086"/>
    </source>
</evidence>
<evidence type="ECO:0000305" key="3"/>
<gene>
    <name type="primary">odhI</name>
    <name type="ordered locus">CE1573</name>
</gene>
<name>ODHI_COREF</name>
<organism>
    <name type="scientific">Corynebacterium efficiens (strain DSM 44549 / YS-314 / AJ 12310 / JCM 11189 / NBRC 100395)</name>
    <dbReference type="NCBI Taxonomy" id="196164"/>
    <lineage>
        <taxon>Bacteria</taxon>
        <taxon>Bacillati</taxon>
        <taxon>Actinomycetota</taxon>
        <taxon>Actinomycetes</taxon>
        <taxon>Mycobacteriales</taxon>
        <taxon>Corynebacteriaceae</taxon>
        <taxon>Corynebacterium</taxon>
    </lineage>
</organism>
<accession>Q8FTJ5</accession>
<reference key="1">
    <citation type="journal article" date="2003" name="Genome Res.">
        <title>Comparative complete genome sequence analysis of the amino acid replacements responsible for the thermostability of Corynebacterium efficiens.</title>
        <authorList>
            <person name="Nishio Y."/>
            <person name="Nakamura Y."/>
            <person name="Kawarabayasi Y."/>
            <person name="Usuda Y."/>
            <person name="Kimura E."/>
            <person name="Sugimoto S."/>
            <person name="Matsui K."/>
            <person name="Yamagishi A."/>
            <person name="Kikuchi H."/>
            <person name="Ikeo K."/>
            <person name="Gojobori T."/>
        </authorList>
    </citation>
    <scope>NUCLEOTIDE SEQUENCE [LARGE SCALE GENOMIC DNA]</scope>
    <source>
        <strain>DSM 44549 / YS-314 / AJ 12310 / JCM 11189 / NBRC 100395</strain>
    </source>
</reference>
<keyword id="KW-0963">Cytoplasm</keyword>
<keyword id="KW-0597">Phosphoprotein</keyword>
<keyword id="KW-1185">Reference proteome</keyword>
<proteinExistence type="inferred from homology"/>
<sequence>MSDNTGTPEPQVETTSVFRADLLKEMSGAGSAPAATGADNLPAGSALLVVKRGPNAGARFLLDQPTTTAGRHPESDIFLDDVTVSRRHAEFRINEGEFEVVDVGSLNGTYVNREPRNSQVLQTGDEIQIGKFRLVFLAGPAA</sequence>
<comment type="function">
    <text evidence="1">An essential component of the PknG signaling pathway. When unphosphorylated, it inhibits the activity of 2-oxoglutarate dehydrogenase. When phosphorylated it does not inhibit 2-oxoglutarate dehydrogenase (By similarity).</text>
</comment>
<comment type="subcellular location">
    <subcellularLocation>
        <location evidence="3">Cytoplasm</location>
    </subcellularLocation>
</comment>
<feature type="initiator methionine" description="Removed" evidence="1">
    <location>
        <position position="1"/>
    </location>
</feature>
<feature type="chain" id="PRO_0000272964" description="Oxoglutarate dehydrogenase inhibitor">
    <location>
        <begin position="2"/>
        <end position="142"/>
    </location>
</feature>
<feature type="domain" description="FHA" evidence="2">
    <location>
        <begin position="67"/>
        <end position="116"/>
    </location>
</feature>
<feature type="modified residue" description="Phosphothreonine" evidence="1">
    <location>
        <position position="14"/>
    </location>
</feature>
<protein>
    <recommendedName>
        <fullName>Oxoglutarate dehydrogenase inhibitor</fullName>
    </recommendedName>
</protein>